<organism>
    <name type="scientific">Mus musculus</name>
    <name type="common">Mouse</name>
    <dbReference type="NCBI Taxonomy" id="10090"/>
    <lineage>
        <taxon>Eukaryota</taxon>
        <taxon>Metazoa</taxon>
        <taxon>Chordata</taxon>
        <taxon>Craniata</taxon>
        <taxon>Vertebrata</taxon>
        <taxon>Euteleostomi</taxon>
        <taxon>Mammalia</taxon>
        <taxon>Eutheria</taxon>
        <taxon>Euarchontoglires</taxon>
        <taxon>Glires</taxon>
        <taxon>Rodentia</taxon>
        <taxon>Myomorpha</taxon>
        <taxon>Muroidea</taxon>
        <taxon>Muridae</taxon>
        <taxon>Murinae</taxon>
        <taxon>Mus</taxon>
        <taxon>Mus</taxon>
    </lineage>
</organism>
<proteinExistence type="evidence at protein level"/>
<reference key="1">
    <citation type="journal article" date="2001" name="J. Immunol.">
        <title>Distinguishing self from nonself: immunogenicity of the murine H47 locus is determined by a single amino acid substitution in an unusual peptide.</title>
        <authorList>
            <person name="Mendoza L.M."/>
            <person name="Villaflor G."/>
            <person name="Eden P."/>
            <person name="Roopenian D."/>
            <person name="Shastri N."/>
        </authorList>
    </citation>
    <scope>NUCLEOTIDE SEQUENCE [MRNA]</scope>
    <scope>VARIANT PHE-46</scope>
    <source>
        <strain>C57BL/6J</strain>
    </source>
</reference>
<reference key="2">
    <citation type="journal article" date="2005" name="Science">
        <title>The transcriptional landscape of the mammalian genome.</title>
        <authorList>
            <person name="Carninci P."/>
            <person name="Kasukawa T."/>
            <person name="Katayama S."/>
            <person name="Gough J."/>
            <person name="Frith M.C."/>
            <person name="Maeda N."/>
            <person name="Oyama R."/>
            <person name="Ravasi T."/>
            <person name="Lenhard B."/>
            <person name="Wells C."/>
            <person name="Kodzius R."/>
            <person name="Shimokawa K."/>
            <person name="Bajic V.B."/>
            <person name="Brenner S.E."/>
            <person name="Batalov S."/>
            <person name="Forrest A.R."/>
            <person name="Zavolan M."/>
            <person name="Davis M.J."/>
            <person name="Wilming L.G."/>
            <person name="Aidinis V."/>
            <person name="Allen J.E."/>
            <person name="Ambesi-Impiombato A."/>
            <person name="Apweiler R."/>
            <person name="Aturaliya R.N."/>
            <person name="Bailey T.L."/>
            <person name="Bansal M."/>
            <person name="Baxter L."/>
            <person name="Beisel K.W."/>
            <person name="Bersano T."/>
            <person name="Bono H."/>
            <person name="Chalk A.M."/>
            <person name="Chiu K.P."/>
            <person name="Choudhary V."/>
            <person name="Christoffels A."/>
            <person name="Clutterbuck D.R."/>
            <person name="Crowe M.L."/>
            <person name="Dalla E."/>
            <person name="Dalrymple B.P."/>
            <person name="de Bono B."/>
            <person name="Della Gatta G."/>
            <person name="di Bernardo D."/>
            <person name="Down T."/>
            <person name="Engstrom P."/>
            <person name="Fagiolini M."/>
            <person name="Faulkner G."/>
            <person name="Fletcher C.F."/>
            <person name="Fukushima T."/>
            <person name="Furuno M."/>
            <person name="Futaki S."/>
            <person name="Gariboldi M."/>
            <person name="Georgii-Hemming P."/>
            <person name="Gingeras T.R."/>
            <person name="Gojobori T."/>
            <person name="Green R.E."/>
            <person name="Gustincich S."/>
            <person name="Harbers M."/>
            <person name="Hayashi Y."/>
            <person name="Hensch T.K."/>
            <person name="Hirokawa N."/>
            <person name="Hill D."/>
            <person name="Huminiecki L."/>
            <person name="Iacono M."/>
            <person name="Ikeo K."/>
            <person name="Iwama A."/>
            <person name="Ishikawa T."/>
            <person name="Jakt M."/>
            <person name="Kanapin A."/>
            <person name="Katoh M."/>
            <person name="Kawasawa Y."/>
            <person name="Kelso J."/>
            <person name="Kitamura H."/>
            <person name="Kitano H."/>
            <person name="Kollias G."/>
            <person name="Krishnan S.P."/>
            <person name="Kruger A."/>
            <person name="Kummerfeld S.K."/>
            <person name="Kurochkin I.V."/>
            <person name="Lareau L.F."/>
            <person name="Lazarevic D."/>
            <person name="Lipovich L."/>
            <person name="Liu J."/>
            <person name="Liuni S."/>
            <person name="McWilliam S."/>
            <person name="Madan Babu M."/>
            <person name="Madera M."/>
            <person name="Marchionni L."/>
            <person name="Matsuda H."/>
            <person name="Matsuzawa S."/>
            <person name="Miki H."/>
            <person name="Mignone F."/>
            <person name="Miyake S."/>
            <person name="Morris K."/>
            <person name="Mottagui-Tabar S."/>
            <person name="Mulder N."/>
            <person name="Nakano N."/>
            <person name="Nakauchi H."/>
            <person name="Ng P."/>
            <person name="Nilsson R."/>
            <person name="Nishiguchi S."/>
            <person name="Nishikawa S."/>
            <person name="Nori F."/>
            <person name="Ohara O."/>
            <person name="Okazaki Y."/>
            <person name="Orlando V."/>
            <person name="Pang K.C."/>
            <person name="Pavan W.J."/>
            <person name="Pavesi G."/>
            <person name="Pesole G."/>
            <person name="Petrovsky N."/>
            <person name="Piazza S."/>
            <person name="Reed J."/>
            <person name="Reid J.F."/>
            <person name="Ring B.Z."/>
            <person name="Ringwald M."/>
            <person name="Rost B."/>
            <person name="Ruan Y."/>
            <person name="Salzberg S.L."/>
            <person name="Sandelin A."/>
            <person name="Schneider C."/>
            <person name="Schoenbach C."/>
            <person name="Sekiguchi K."/>
            <person name="Semple C.A."/>
            <person name="Seno S."/>
            <person name="Sessa L."/>
            <person name="Sheng Y."/>
            <person name="Shibata Y."/>
            <person name="Shimada H."/>
            <person name="Shimada K."/>
            <person name="Silva D."/>
            <person name="Sinclair B."/>
            <person name="Sperling S."/>
            <person name="Stupka E."/>
            <person name="Sugiura K."/>
            <person name="Sultana R."/>
            <person name="Takenaka Y."/>
            <person name="Taki K."/>
            <person name="Tammoja K."/>
            <person name="Tan S.L."/>
            <person name="Tang S."/>
            <person name="Taylor M.S."/>
            <person name="Tegner J."/>
            <person name="Teichmann S.A."/>
            <person name="Ueda H.R."/>
            <person name="van Nimwegen E."/>
            <person name="Verardo R."/>
            <person name="Wei C.L."/>
            <person name="Yagi K."/>
            <person name="Yamanishi H."/>
            <person name="Zabarovsky E."/>
            <person name="Zhu S."/>
            <person name="Zimmer A."/>
            <person name="Hide W."/>
            <person name="Bult C."/>
            <person name="Grimmond S.M."/>
            <person name="Teasdale R.D."/>
            <person name="Liu E.T."/>
            <person name="Brusic V."/>
            <person name="Quackenbush J."/>
            <person name="Wahlestedt C."/>
            <person name="Mattick J.S."/>
            <person name="Hume D.A."/>
            <person name="Kai C."/>
            <person name="Sasaki D."/>
            <person name="Tomaru Y."/>
            <person name="Fukuda S."/>
            <person name="Kanamori-Katayama M."/>
            <person name="Suzuki M."/>
            <person name="Aoki J."/>
            <person name="Arakawa T."/>
            <person name="Iida J."/>
            <person name="Imamura K."/>
            <person name="Itoh M."/>
            <person name="Kato T."/>
            <person name="Kawaji H."/>
            <person name="Kawagashira N."/>
            <person name="Kawashima T."/>
            <person name="Kojima M."/>
            <person name="Kondo S."/>
            <person name="Konno H."/>
            <person name="Nakano K."/>
            <person name="Ninomiya N."/>
            <person name="Nishio T."/>
            <person name="Okada M."/>
            <person name="Plessy C."/>
            <person name="Shibata K."/>
            <person name="Shiraki T."/>
            <person name="Suzuki S."/>
            <person name="Tagami M."/>
            <person name="Waki K."/>
            <person name="Watahiki A."/>
            <person name="Okamura-Oho Y."/>
            <person name="Suzuki H."/>
            <person name="Kawai J."/>
            <person name="Hayashizaki Y."/>
        </authorList>
    </citation>
    <scope>NUCLEOTIDE SEQUENCE [LARGE SCALE MRNA]</scope>
    <source>
        <strain>C57BL/6J</strain>
        <tissue>Cerebellum</tissue>
    </source>
</reference>
<reference key="3">
    <citation type="journal article" date="2004" name="Genome Res.">
        <title>The status, quality, and expansion of the NIH full-length cDNA project: the Mammalian Gene Collection (MGC).</title>
        <authorList>
            <consortium name="The MGC Project Team"/>
        </authorList>
    </citation>
    <scope>NUCLEOTIDE SEQUENCE [LARGE SCALE MRNA]</scope>
</reference>
<reference key="4">
    <citation type="journal article" date="2010" name="Cell">
        <title>A tissue-specific atlas of mouse protein phosphorylation and expression.</title>
        <authorList>
            <person name="Huttlin E.L."/>
            <person name="Jedrychowski M.P."/>
            <person name="Elias J.E."/>
            <person name="Goswami T."/>
            <person name="Rad R."/>
            <person name="Beausoleil S.A."/>
            <person name="Villen J."/>
            <person name="Haas W."/>
            <person name="Sowa M.E."/>
            <person name="Gygi S.P."/>
        </authorList>
    </citation>
    <scope>IDENTIFICATION BY MASS SPECTROMETRY [LARGE SCALE ANALYSIS]</scope>
    <source>
        <tissue>Brain</tissue>
        <tissue>Heart</tissue>
        <tissue>Kidney</tissue>
        <tissue>Liver</tissue>
        <tissue>Lung</tissue>
        <tissue>Pancreas</tissue>
        <tissue>Spleen</tissue>
        <tissue>Testis</tissue>
    </source>
</reference>
<reference key="5">
    <citation type="journal article" date="2014" name="Dev. Biol.">
        <title>Contribution of calumin to embryogenesis through participation in the endoplasmic reticulum-associated degradation activity.</title>
        <authorList>
            <person name="Yamamoto S."/>
            <person name="Yamazaki T."/>
            <person name="Komazaki S."/>
            <person name="Yamashita T."/>
            <person name="Osaki M."/>
            <person name="Matsubayashi M."/>
            <person name="Kidoya H."/>
            <person name="Takakura N."/>
            <person name="Yamazaki D."/>
            <person name="Kakizawa S."/>
        </authorList>
    </citation>
    <scope>INTERACTION WITH CCDC47</scope>
</reference>
<dbReference type="EMBL" id="AF335543">
    <property type="protein sequence ID" value="AAK07659.1"/>
    <property type="status" value="ALT_SEQ"/>
    <property type="molecule type" value="mRNA"/>
</dbReference>
<dbReference type="EMBL" id="AK005204">
    <property type="protein sequence ID" value="BAB23882.1"/>
    <property type="status" value="ALT_SEQ"/>
    <property type="molecule type" value="mRNA"/>
</dbReference>
<dbReference type="EMBL" id="BC011091">
    <property type="protein sequence ID" value="AAH11091.1"/>
    <property type="status" value="ALT_SEQ"/>
    <property type="molecule type" value="mRNA"/>
</dbReference>
<dbReference type="CCDS" id="CCDS39977.1"/>
<dbReference type="RefSeq" id="NP_001335175.1">
    <property type="nucleotide sequence ID" value="NM_001348246.1"/>
</dbReference>
<dbReference type="RefSeq" id="NP_077759.3">
    <property type="nucleotide sequence ID" value="NM_024439.3"/>
</dbReference>
<dbReference type="BioGRID" id="225064">
    <property type="interactions" value="1"/>
</dbReference>
<dbReference type="FunCoup" id="Q9BCZ4">
    <property type="interactions" value="420"/>
</dbReference>
<dbReference type="STRING" id="10090.ENSMUSP00000099301"/>
<dbReference type="iPTMnet" id="Q9BCZ4"/>
<dbReference type="PhosphoSitePlus" id="Q9BCZ4"/>
<dbReference type="SwissPalm" id="Q9BCZ4"/>
<dbReference type="PaxDb" id="10090-ENSMUSP00000099301"/>
<dbReference type="PeptideAtlas" id="Q9BCZ4"/>
<dbReference type="ProteomicsDB" id="261147"/>
<dbReference type="Pumba" id="Q9BCZ4"/>
<dbReference type="Antibodypedia" id="2437">
    <property type="antibodies" value="144 antibodies from 25 providers"/>
</dbReference>
<dbReference type="DNASU" id="109815"/>
<dbReference type="Ensembl" id="ENSMUST00000101801.8">
    <property type="protein sequence ID" value="ENSMUSP00000099301.7"/>
    <property type="gene ID" value="ENSMUSG00000075701.11"/>
</dbReference>
<dbReference type="GeneID" id="109815"/>
<dbReference type="KEGG" id="mmu:109815"/>
<dbReference type="UCSC" id="uc009hha.1">
    <property type="organism name" value="mouse"/>
</dbReference>
<dbReference type="AGR" id="MGI:95994"/>
<dbReference type="CTD" id="55829"/>
<dbReference type="MGI" id="MGI:95994">
    <property type="gene designation" value="Selenos"/>
</dbReference>
<dbReference type="VEuPathDB" id="HostDB:ENSMUSG00000075701"/>
<dbReference type="eggNOG" id="ENOG502RXYU">
    <property type="taxonomic scope" value="Eukaryota"/>
</dbReference>
<dbReference type="GeneTree" id="ENSGT00390000015688"/>
<dbReference type="HOGENOM" id="CLU_117238_0_0_1"/>
<dbReference type="InParanoid" id="Q9BCZ4"/>
<dbReference type="OMA" id="KIAMWEN"/>
<dbReference type="OrthoDB" id="75792at2759"/>
<dbReference type="PhylomeDB" id="Q9BCZ4"/>
<dbReference type="TreeFam" id="TF329454"/>
<dbReference type="BioGRID-ORCS" id="109815">
    <property type="hits" value="3 hits in 77 CRISPR screens"/>
</dbReference>
<dbReference type="ChiTaRS" id="Selenos">
    <property type="organism name" value="mouse"/>
</dbReference>
<dbReference type="PRO" id="PR:Q9BCZ4"/>
<dbReference type="Proteomes" id="UP000000589">
    <property type="component" value="Chromosome 7"/>
</dbReference>
<dbReference type="RNAct" id="Q9BCZ4">
    <property type="molecule type" value="protein"/>
</dbReference>
<dbReference type="Bgee" id="ENSMUSG00000075701">
    <property type="expression patterns" value="Expressed in lacrimal gland and 261 other cell types or tissues"/>
</dbReference>
<dbReference type="ExpressionAtlas" id="Q9BCZ4">
    <property type="expression patterns" value="baseline and differential"/>
</dbReference>
<dbReference type="GO" id="GO:0005881">
    <property type="term" value="C:cytoplasmic microtubule"/>
    <property type="evidence" value="ECO:0000250"/>
    <property type="project" value="UniProtKB"/>
</dbReference>
<dbReference type="GO" id="GO:0036513">
    <property type="term" value="C:Derlin-1 retrotranslocation complex"/>
    <property type="evidence" value="ECO:0007669"/>
    <property type="project" value="Ensembl"/>
</dbReference>
<dbReference type="GO" id="GO:0036502">
    <property type="term" value="C:Derlin-1-VIMP complex"/>
    <property type="evidence" value="ECO:0007669"/>
    <property type="project" value="Ensembl"/>
</dbReference>
<dbReference type="GO" id="GO:0034362">
    <property type="term" value="C:low-density lipoprotein particle"/>
    <property type="evidence" value="ECO:0007669"/>
    <property type="project" value="Ensembl"/>
</dbReference>
<dbReference type="GO" id="GO:0034361">
    <property type="term" value="C:very-low-density lipoprotein particle"/>
    <property type="evidence" value="ECO:0007669"/>
    <property type="project" value="Ensembl"/>
</dbReference>
<dbReference type="GO" id="GO:0016209">
    <property type="term" value="F:antioxidant activity"/>
    <property type="evidence" value="ECO:0007669"/>
    <property type="project" value="Ensembl"/>
</dbReference>
<dbReference type="GO" id="GO:0051117">
    <property type="term" value="F:ATPase binding"/>
    <property type="evidence" value="ECO:0007669"/>
    <property type="project" value="Ensembl"/>
</dbReference>
<dbReference type="GO" id="GO:1990381">
    <property type="term" value="F:ubiquitin-specific protease binding"/>
    <property type="evidence" value="ECO:0007669"/>
    <property type="project" value="Ensembl"/>
</dbReference>
<dbReference type="GO" id="GO:0045454">
    <property type="term" value="P:cell redox homeostasis"/>
    <property type="evidence" value="ECO:0007669"/>
    <property type="project" value="Ensembl"/>
</dbReference>
<dbReference type="GO" id="GO:0071222">
    <property type="term" value="P:cellular response to lipopolysaccharide"/>
    <property type="evidence" value="ECO:0007669"/>
    <property type="project" value="Ensembl"/>
</dbReference>
<dbReference type="GO" id="GO:0034599">
    <property type="term" value="P:cellular response to oxidative stress"/>
    <property type="evidence" value="ECO:0007669"/>
    <property type="project" value="Ensembl"/>
</dbReference>
<dbReference type="GO" id="GO:0030968">
    <property type="term" value="P:endoplasmic reticulum unfolded protein response"/>
    <property type="evidence" value="ECO:0007669"/>
    <property type="project" value="Ensembl"/>
</dbReference>
<dbReference type="GO" id="GO:0006983">
    <property type="term" value="P:ER overload response"/>
    <property type="evidence" value="ECO:0007669"/>
    <property type="project" value="Ensembl"/>
</dbReference>
<dbReference type="GO" id="GO:0002865">
    <property type="term" value="P:negative regulation of acute inflammatory response to antigenic stimulus"/>
    <property type="evidence" value="ECO:0007669"/>
    <property type="project" value="Ensembl"/>
</dbReference>
<dbReference type="GO" id="GO:1902236">
    <property type="term" value="P:negative regulation of endoplasmic reticulum stress-induced intrinsic apoptotic signaling pathway"/>
    <property type="evidence" value="ECO:0007669"/>
    <property type="project" value="Ensembl"/>
</dbReference>
<dbReference type="GO" id="GO:0050728">
    <property type="term" value="P:negative regulation of inflammatory response"/>
    <property type="evidence" value="ECO:0000305"/>
    <property type="project" value="BHF-UCL"/>
</dbReference>
<dbReference type="GO" id="GO:0032715">
    <property type="term" value="P:negative regulation of interleukin-6 production"/>
    <property type="evidence" value="ECO:0000315"/>
    <property type="project" value="BHF-UCL"/>
</dbReference>
<dbReference type="GO" id="GO:2000110">
    <property type="term" value="P:negative regulation of macrophage apoptotic process"/>
    <property type="evidence" value="ECO:0007669"/>
    <property type="project" value="Ensembl"/>
</dbReference>
<dbReference type="GO" id="GO:0032720">
    <property type="term" value="P:negative regulation of tumor necrosis factor production"/>
    <property type="evidence" value="ECO:0000315"/>
    <property type="project" value="BHF-UCL"/>
</dbReference>
<dbReference type="GO" id="GO:0080164">
    <property type="term" value="P:regulation of nitric oxide metabolic process"/>
    <property type="evidence" value="ECO:0007669"/>
    <property type="project" value="Ensembl"/>
</dbReference>
<dbReference type="GO" id="GO:0009749">
    <property type="term" value="P:response to glucose"/>
    <property type="evidence" value="ECO:0007669"/>
    <property type="project" value="Ensembl"/>
</dbReference>
<dbReference type="GO" id="GO:0051775">
    <property type="term" value="P:response to redox state"/>
    <property type="evidence" value="ECO:0007669"/>
    <property type="project" value="Ensembl"/>
</dbReference>
<dbReference type="GO" id="GO:0030970">
    <property type="term" value="P:retrograde protein transport, ER to cytosol"/>
    <property type="evidence" value="ECO:0007669"/>
    <property type="project" value="Ensembl"/>
</dbReference>
<dbReference type="Gene3D" id="6.10.250.2950">
    <property type="match status" value="1"/>
</dbReference>
<dbReference type="InterPro" id="IPR009703">
    <property type="entry name" value="Selenoprotein_S"/>
</dbReference>
<dbReference type="PANTHER" id="PTHR28621">
    <property type="entry name" value="SELENOPROTEIN S"/>
    <property type="match status" value="1"/>
</dbReference>
<dbReference type="PANTHER" id="PTHR28621:SF1">
    <property type="entry name" value="SELENOPROTEIN S"/>
    <property type="match status" value="1"/>
</dbReference>
<dbReference type="Pfam" id="PF06936">
    <property type="entry name" value="Selenoprotein_S"/>
    <property type="match status" value="1"/>
</dbReference>
<keyword id="KW-0963">Cytoplasm</keyword>
<keyword id="KW-0256">Endoplasmic reticulum</keyword>
<keyword id="KW-0472">Membrane</keyword>
<keyword id="KW-1185">Reference proteome</keyword>
<keyword id="KW-0712">Selenocysteine</keyword>
<keyword id="KW-0812">Transmembrane</keyword>
<keyword id="KW-1133">Transmembrane helix</keyword>
<keyword id="KW-0832">Ubl conjugation</keyword>
<gene>
    <name evidence="9" type="primary">Selenos</name>
    <name evidence="7" type="synonym">H47</name>
    <name evidence="9" type="synonym">Vimp</name>
</gene>
<comment type="function">
    <text evidence="1">Involved in the degradation process of misfolded endoplasmic reticulum (ER) luminal proteins. Participates in the transfer of misfolded proteins from the ER to the cytosol, where they are destroyed by the proteasome in a ubiquitin-dependent manner. Probably acts by serving as a linker between DERL1, which mediates the retrotranslocation of misfolded proteins into the cytosol, and the ATPase complex VCP, which mediates the translocation and ubiquitination (By similarity).</text>
</comment>
<comment type="subunit">
    <text evidence="1 2 6">Interacts with DERL1 and (via VIM motif) with VCP, suggesting that it forms a membrane complex with DERL1 that serves as a receptor for VCP. Also interacts with DERL2, DERL3 and SELENOK. The SELENOK-SELENOS complex interacts with VCP (By similarity). Interacts with CCDC47 (PubMed:25009997).</text>
</comment>
<comment type="subcellular location">
    <subcellularLocation>
        <location evidence="1">Endoplasmic reticulum membrane</location>
        <topology evidence="1">Single-pass membrane protein</topology>
    </subcellularLocation>
    <subcellularLocation>
        <location evidence="1">Cytoplasm</location>
    </subcellularLocation>
</comment>
<comment type="PTM">
    <text evidence="2">Truncated SELENOS proteins produced by failed UGA/Sec decoding are ubiquitinated by the CRL2(KLHDC2) and CRL2(KLHDC3) complexes, which recognizes the glycine (Gly) at the C-terminus of truncated SELENOS proteins. Truncated SELENOS proteins produced by failed UGA/Sec decoding are also ubiquitinated by the CRL5(KLHDC1) complex.</text>
</comment>
<comment type="miscellaneous">
    <text>One of the histocompatibility antigen responsible for chronic graft rejection.</text>
</comment>
<comment type="similarity">
    <text evidence="8">Belongs to the selenoprotein S family.</text>
</comment>
<comment type="sequence caution" evidence="8">
    <conflict type="erroneous termination">
        <sequence resource="EMBL-CDS" id="AAH11091"/>
    </conflict>
    <text>Truncated C-terminus.</text>
</comment>
<comment type="sequence caution" evidence="8">
    <conflict type="erroneous termination">
        <sequence resource="EMBL-CDS" id="AAK07659"/>
    </conflict>
    <text>Truncated C-terminus.</text>
</comment>
<comment type="sequence caution" evidence="8">
    <conflict type="erroneous termination">
        <sequence resource="EMBL-CDS" id="BAB23882"/>
    </conflict>
    <text>Truncated C-terminus.</text>
</comment>
<evidence type="ECO:0000250" key="1"/>
<evidence type="ECO:0000250" key="2">
    <source>
        <dbReference type="UniProtKB" id="Q9BQE4"/>
    </source>
</evidence>
<evidence type="ECO:0000255" key="3"/>
<evidence type="ECO:0000256" key="4">
    <source>
        <dbReference type="SAM" id="MobiDB-lite"/>
    </source>
</evidence>
<evidence type="ECO:0000269" key="5">
    <source>
    </source>
</evidence>
<evidence type="ECO:0000269" key="6">
    <source>
    </source>
</evidence>
<evidence type="ECO:0000303" key="7">
    <source>
    </source>
</evidence>
<evidence type="ECO:0000305" key="8"/>
<evidence type="ECO:0000312" key="9">
    <source>
        <dbReference type="MGI" id="MGI:95994"/>
    </source>
</evidence>
<sequence length="190" mass="21509">MDRDEEPLSARPALETESLRFLHVTVGSLLASYGWYILFSCILLYIVIQRLSLRLRALRQRQLDQAETVLEPDVVVKRQEALAAARLRMQEDLNAQVEKHKEKLRQLEEEKRRQKIEMWDSMQEGRSYKRNSGRPQEEDGPGPSTSSVIPKGKSDKKPLRGGGYNPLTGEGGGTCSWRPGRRGPSSGGUN</sequence>
<feature type="chain" id="PRO_0000097673" description="Selenoprotein S">
    <location>
        <begin position="1"/>
        <end position="190"/>
    </location>
</feature>
<feature type="transmembrane region" description="Helical" evidence="3">
    <location>
        <begin position="28"/>
        <end position="48"/>
    </location>
</feature>
<feature type="region of interest" description="VCP/p97-interacting motif (VIM)" evidence="2">
    <location>
        <begin position="78"/>
        <end position="90"/>
    </location>
</feature>
<feature type="region of interest" description="Disordered" evidence="4">
    <location>
        <begin position="115"/>
        <end position="190"/>
    </location>
</feature>
<feature type="compositionally biased region" description="Gly residues" evidence="4">
    <location>
        <begin position="160"/>
        <end position="174"/>
    </location>
</feature>
<feature type="non-standard amino acid" description="Selenocysteine" evidence="1">
    <location>
        <position position="189"/>
    </location>
</feature>
<feature type="sequence variant" description="In allele H47b." evidence="5">
    <original>I</original>
    <variation>F</variation>
    <location>
        <position position="46"/>
    </location>
</feature>
<feature type="sequence conflict" description="In Ref. 3; AAH11091." evidence="8" ref="3">
    <original>A</original>
    <variation>P</variation>
    <location>
        <position position="10"/>
    </location>
</feature>
<name>SELS_MOUSE</name>
<protein>
    <recommendedName>
        <fullName evidence="2">Selenoprotein S</fullName>
        <shortName evidence="2">SelS</shortName>
    </recommendedName>
    <alternativeName>
        <fullName evidence="7">Minor histocompatibility antigen H47</fullName>
    </alternativeName>
</protein>
<accession>Q9BCZ4</accession>
<accession>Q921S1</accession>
<accession>Q9DB55</accession>